<protein>
    <recommendedName>
        <fullName evidence="1">UPF0149 protein YgfB</fullName>
    </recommendedName>
</protein>
<organism>
    <name type="scientific">Escherichia fergusonii (strain ATCC 35469 / DSM 13698 / CCUG 18766 / IAM 14443 / JCM 21226 / LMG 7866 / NBRC 102419 / NCTC 12128 / CDC 0568-73)</name>
    <dbReference type="NCBI Taxonomy" id="585054"/>
    <lineage>
        <taxon>Bacteria</taxon>
        <taxon>Pseudomonadati</taxon>
        <taxon>Pseudomonadota</taxon>
        <taxon>Gammaproteobacteria</taxon>
        <taxon>Enterobacterales</taxon>
        <taxon>Enterobacteriaceae</taxon>
        <taxon>Escherichia</taxon>
    </lineage>
</organism>
<comment type="similarity">
    <text evidence="1">Belongs to the UPF0149 family.</text>
</comment>
<sequence length="192" mass="21230">MSIQNEMPGYNEMNQYLNQQGTGLTPAEMHGLISGMICGGNDDSSWLPLLHDLTNEGMAFGHELAQALRKMHSATSDALQDDGFLFQLYLPDGDDVSVFDRADALAGWVNHFLLGLGVTQPKLDKVTGETGEAIDDLRNIAQLGYDEDEDQEELEMSLEEIIEYVRVAALLCHDTFTHPQPTAPEVQKPTLH</sequence>
<gene>
    <name evidence="1" type="primary">ygfB</name>
    <name type="ordered locus">EFER_2846</name>
</gene>
<dbReference type="EMBL" id="CU928158">
    <property type="protein sequence ID" value="CAQ90340.1"/>
    <property type="molecule type" value="Genomic_DNA"/>
</dbReference>
<dbReference type="RefSeq" id="WP_001295378.1">
    <property type="nucleotide sequence ID" value="NC_011740.1"/>
</dbReference>
<dbReference type="SMR" id="B7LPC3"/>
<dbReference type="GeneID" id="93779092"/>
<dbReference type="KEGG" id="efe:EFER_2846"/>
<dbReference type="HOGENOM" id="CLU_085336_1_0_6"/>
<dbReference type="OrthoDB" id="9783391at2"/>
<dbReference type="Proteomes" id="UP000000745">
    <property type="component" value="Chromosome"/>
</dbReference>
<dbReference type="GO" id="GO:0005829">
    <property type="term" value="C:cytosol"/>
    <property type="evidence" value="ECO:0007669"/>
    <property type="project" value="TreeGrafter"/>
</dbReference>
<dbReference type="FunFam" id="1.20.120.740:FF:000001">
    <property type="entry name" value="UPF0149 protein YgfB"/>
    <property type="match status" value="1"/>
</dbReference>
<dbReference type="Gene3D" id="1.20.120.740">
    <property type="entry name" value="YgfB uncharacterised protein family UPF0149, PF03695"/>
    <property type="match status" value="1"/>
</dbReference>
<dbReference type="HAMAP" id="MF_00346">
    <property type="entry name" value="UPF0149"/>
    <property type="match status" value="1"/>
</dbReference>
<dbReference type="InterPro" id="IPR011978">
    <property type="entry name" value="YgfB-like"/>
</dbReference>
<dbReference type="InterPro" id="IPR036255">
    <property type="entry name" value="YgfB-like_sf"/>
</dbReference>
<dbReference type="NCBIfam" id="NF002477">
    <property type="entry name" value="PRK01736.1"/>
    <property type="match status" value="1"/>
</dbReference>
<dbReference type="NCBIfam" id="TIGR02292">
    <property type="entry name" value="ygfB_yecA"/>
    <property type="match status" value="1"/>
</dbReference>
<dbReference type="PANTHER" id="PTHR37528">
    <property type="entry name" value="UPF0149 PROTEIN YGFB"/>
    <property type="match status" value="1"/>
</dbReference>
<dbReference type="PANTHER" id="PTHR37528:SF1">
    <property type="entry name" value="UPF0149 PROTEIN YGFB"/>
    <property type="match status" value="1"/>
</dbReference>
<dbReference type="Pfam" id="PF03695">
    <property type="entry name" value="UPF0149"/>
    <property type="match status" value="1"/>
</dbReference>
<dbReference type="SUPFAM" id="SSF101327">
    <property type="entry name" value="YgfB-like"/>
    <property type="match status" value="1"/>
</dbReference>
<evidence type="ECO:0000255" key="1">
    <source>
        <dbReference type="HAMAP-Rule" id="MF_00346"/>
    </source>
</evidence>
<reference key="1">
    <citation type="journal article" date="2009" name="PLoS Genet.">
        <title>Organised genome dynamics in the Escherichia coli species results in highly diverse adaptive paths.</title>
        <authorList>
            <person name="Touchon M."/>
            <person name="Hoede C."/>
            <person name="Tenaillon O."/>
            <person name="Barbe V."/>
            <person name="Baeriswyl S."/>
            <person name="Bidet P."/>
            <person name="Bingen E."/>
            <person name="Bonacorsi S."/>
            <person name="Bouchier C."/>
            <person name="Bouvet O."/>
            <person name="Calteau A."/>
            <person name="Chiapello H."/>
            <person name="Clermont O."/>
            <person name="Cruveiller S."/>
            <person name="Danchin A."/>
            <person name="Diard M."/>
            <person name="Dossat C."/>
            <person name="Karoui M.E."/>
            <person name="Frapy E."/>
            <person name="Garry L."/>
            <person name="Ghigo J.M."/>
            <person name="Gilles A.M."/>
            <person name="Johnson J."/>
            <person name="Le Bouguenec C."/>
            <person name="Lescat M."/>
            <person name="Mangenot S."/>
            <person name="Martinez-Jehanne V."/>
            <person name="Matic I."/>
            <person name="Nassif X."/>
            <person name="Oztas S."/>
            <person name="Petit M.A."/>
            <person name="Pichon C."/>
            <person name="Rouy Z."/>
            <person name="Ruf C.S."/>
            <person name="Schneider D."/>
            <person name="Tourret J."/>
            <person name="Vacherie B."/>
            <person name="Vallenet D."/>
            <person name="Medigue C."/>
            <person name="Rocha E.P.C."/>
            <person name="Denamur E."/>
        </authorList>
    </citation>
    <scope>NUCLEOTIDE SEQUENCE [LARGE SCALE GENOMIC DNA]</scope>
    <source>
        <strain>ATCC 35469 / DSM 13698 / BCRC 15582 / CCUG 18766 / IAM 14443 / JCM 21226 / LMG 7866 / NBRC 102419 / NCTC 12128 / CDC 0568-73</strain>
    </source>
</reference>
<accession>B7LPC3</accession>
<name>YGFB_ESCF3</name>
<feature type="chain" id="PRO_1000120474" description="UPF0149 protein YgfB">
    <location>
        <begin position="1"/>
        <end position="192"/>
    </location>
</feature>
<proteinExistence type="inferred from homology"/>